<gene>
    <name evidence="1" type="primary">lutB</name>
    <name type="ordered locus">BA_1316</name>
    <name type="ordered locus">GBAA_1316</name>
    <name type="ordered locus">BAS1217</name>
</gene>
<accession>Q81TG1</accession>
<accession>Q6I1P3</accession>
<accession>Q6KVI6</accession>
<feature type="chain" id="PRO_0000383962" description="Lactate utilization protein B">
    <location>
        <begin position="1"/>
        <end position="473"/>
    </location>
</feature>
<feature type="domain" description="4Fe-4S ferredoxin-type 1" evidence="1">
    <location>
        <begin position="302"/>
        <end position="332"/>
    </location>
</feature>
<feature type="domain" description="4Fe-4S ferredoxin-type 2" evidence="1">
    <location>
        <begin position="351"/>
        <end position="380"/>
    </location>
</feature>
<feature type="binding site" evidence="1">
    <location>
        <position position="311"/>
    </location>
    <ligand>
        <name>[4Fe-4S] cluster</name>
        <dbReference type="ChEBI" id="CHEBI:49883"/>
        <label>1</label>
    </ligand>
</feature>
<feature type="binding site" evidence="1">
    <location>
        <position position="314"/>
    </location>
    <ligand>
        <name>[4Fe-4S] cluster</name>
        <dbReference type="ChEBI" id="CHEBI:49883"/>
        <label>1</label>
    </ligand>
</feature>
<feature type="binding site" evidence="1">
    <location>
        <position position="317"/>
    </location>
    <ligand>
        <name>[4Fe-4S] cluster</name>
        <dbReference type="ChEBI" id="CHEBI:49883"/>
        <label>1</label>
    </ligand>
</feature>
<feature type="binding site" evidence="1">
    <location>
        <position position="321"/>
    </location>
    <ligand>
        <name>[4Fe-4S] cluster</name>
        <dbReference type="ChEBI" id="CHEBI:49883"/>
        <label>2</label>
    </ligand>
</feature>
<feature type="binding site" evidence="1">
    <location>
        <position position="364"/>
    </location>
    <ligand>
        <name>[4Fe-4S] cluster</name>
        <dbReference type="ChEBI" id="CHEBI:49883"/>
        <label>2</label>
    </ligand>
</feature>
<feature type="binding site" evidence="1">
    <location>
        <position position="367"/>
    </location>
    <ligand>
        <name>[4Fe-4S] cluster</name>
        <dbReference type="ChEBI" id="CHEBI:49883"/>
        <label>2</label>
    </ligand>
</feature>
<feature type="binding site" evidence="1">
    <location>
        <position position="371"/>
    </location>
    <ligand>
        <name>[4Fe-4S] cluster</name>
        <dbReference type="ChEBI" id="CHEBI:49883"/>
        <label>1</label>
    </ligand>
</feature>
<evidence type="ECO:0000255" key="1">
    <source>
        <dbReference type="HAMAP-Rule" id="MF_02103"/>
    </source>
</evidence>
<comment type="function">
    <text evidence="1">Is involved in L-lactate degradation and allows cells to grow with lactate as the sole carbon source. Has probably a role as an electron transporter during oxidation of L-lactate.</text>
</comment>
<comment type="similarity">
    <text evidence="1">Belongs to the LutB/YkgF family.</text>
</comment>
<sequence length="473" mass="52669">MSMKISEKKFNDRVGDGIQDSFMRGAVSSAQTRLYTNRLKAADELGNWEEWRELGEEIRQHTLENLDYYLMQLSENVSKRGGHVYFAKTKEEAAKYIQDVAKKKQAKKVVKSKSMVTEEISMNHALEEIGCEVLESDLGEYILQVDNDPPSHIIAPALHKNRTQIRDVFKEKLGYENSDDPYEMTKFVRKQLREKFMDAEIGVTGCNFAVANTGSLCLVTNEGNADLVMSIPKTQIAVMGMERMVPTMEELDVLVGLLCRSAVGQKLTSYVTVAGPIQEEEVDGPEEFHLVVVDNGRSQILGSEFRQVLQCIRCAACVNVCPVYRHVGGHSYGSIYSGPIGAVLTPLLGGYDDYKELPYASSLCGACTEACPVKIPLHDLLLKHRQVIVEQEGRAPLAEKLAMKMFSMGASSAALYKMGSKMAPAAMSPFTSGNRVSKGVGPLKNWTDIREFPAPSKERFRDWYKDHKKGGDK</sequence>
<reference key="1">
    <citation type="journal article" date="2003" name="Nature">
        <title>The genome sequence of Bacillus anthracis Ames and comparison to closely related bacteria.</title>
        <authorList>
            <person name="Read T.D."/>
            <person name="Peterson S.N."/>
            <person name="Tourasse N.J."/>
            <person name="Baillie L.W."/>
            <person name="Paulsen I.T."/>
            <person name="Nelson K.E."/>
            <person name="Tettelin H."/>
            <person name="Fouts D.E."/>
            <person name="Eisen J.A."/>
            <person name="Gill S.R."/>
            <person name="Holtzapple E.K."/>
            <person name="Okstad O.A."/>
            <person name="Helgason E."/>
            <person name="Rilstone J."/>
            <person name="Wu M."/>
            <person name="Kolonay J.F."/>
            <person name="Beanan M.J."/>
            <person name="Dodson R.J."/>
            <person name="Brinkac L.M."/>
            <person name="Gwinn M.L."/>
            <person name="DeBoy R.T."/>
            <person name="Madpu R."/>
            <person name="Daugherty S.C."/>
            <person name="Durkin A.S."/>
            <person name="Haft D.H."/>
            <person name="Nelson W.C."/>
            <person name="Peterson J.D."/>
            <person name="Pop M."/>
            <person name="Khouri H.M."/>
            <person name="Radune D."/>
            <person name="Benton J.L."/>
            <person name="Mahamoud Y."/>
            <person name="Jiang L."/>
            <person name="Hance I.R."/>
            <person name="Weidman J.F."/>
            <person name="Berry K.J."/>
            <person name="Plaut R.D."/>
            <person name="Wolf A.M."/>
            <person name="Watkins K.L."/>
            <person name="Nierman W.C."/>
            <person name="Hazen A."/>
            <person name="Cline R.T."/>
            <person name="Redmond C."/>
            <person name="Thwaite J.E."/>
            <person name="White O."/>
            <person name="Salzberg S.L."/>
            <person name="Thomason B."/>
            <person name="Friedlander A.M."/>
            <person name="Koehler T.M."/>
            <person name="Hanna P.C."/>
            <person name="Kolstoe A.-B."/>
            <person name="Fraser C.M."/>
        </authorList>
    </citation>
    <scope>NUCLEOTIDE SEQUENCE [LARGE SCALE GENOMIC DNA]</scope>
    <source>
        <strain>Ames / isolate Porton</strain>
    </source>
</reference>
<reference key="2">
    <citation type="submission" date="2004-01" db="EMBL/GenBank/DDBJ databases">
        <title>Complete genome sequence of Bacillus anthracis Sterne.</title>
        <authorList>
            <person name="Brettin T.S."/>
            <person name="Bruce D."/>
            <person name="Challacombe J.F."/>
            <person name="Gilna P."/>
            <person name="Han C."/>
            <person name="Hill K."/>
            <person name="Hitchcock P."/>
            <person name="Jackson P."/>
            <person name="Keim P."/>
            <person name="Longmire J."/>
            <person name="Lucas S."/>
            <person name="Okinaka R."/>
            <person name="Richardson P."/>
            <person name="Rubin E."/>
            <person name="Tice H."/>
        </authorList>
    </citation>
    <scope>NUCLEOTIDE SEQUENCE [LARGE SCALE GENOMIC DNA]</scope>
    <source>
        <strain>Sterne</strain>
    </source>
</reference>
<reference key="3">
    <citation type="journal article" date="2009" name="J. Bacteriol.">
        <title>The complete genome sequence of Bacillus anthracis Ames 'Ancestor'.</title>
        <authorList>
            <person name="Ravel J."/>
            <person name="Jiang L."/>
            <person name="Stanley S.T."/>
            <person name="Wilson M.R."/>
            <person name="Decker R.S."/>
            <person name="Read T.D."/>
            <person name="Worsham P."/>
            <person name="Keim P.S."/>
            <person name="Salzberg S.L."/>
            <person name="Fraser-Liggett C.M."/>
            <person name="Rasko D.A."/>
        </authorList>
    </citation>
    <scope>NUCLEOTIDE SEQUENCE [LARGE SCALE GENOMIC DNA]</scope>
    <source>
        <strain>Ames ancestor</strain>
    </source>
</reference>
<proteinExistence type="inferred from homology"/>
<dbReference type="EMBL" id="AE016879">
    <property type="protein sequence ID" value="AAP25268.1"/>
    <property type="molecule type" value="Genomic_DNA"/>
</dbReference>
<dbReference type="EMBL" id="AE017334">
    <property type="protein sequence ID" value="AAT30405.1"/>
    <property type="molecule type" value="Genomic_DNA"/>
</dbReference>
<dbReference type="EMBL" id="AE017225">
    <property type="protein sequence ID" value="AAT53538.1"/>
    <property type="molecule type" value="Genomic_DNA"/>
</dbReference>
<dbReference type="RefSeq" id="NP_843782.1">
    <property type="nucleotide sequence ID" value="NC_003997.3"/>
</dbReference>
<dbReference type="RefSeq" id="WP_000061914.1">
    <property type="nucleotide sequence ID" value="NZ_WXXJ01000029.1"/>
</dbReference>
<dbReference type="RefSeq" id="YP_027487.1">
    <property type="nucleotide sequence ID" value="NC_005945.1"/>
</dbReference>
<dbReference type="IntAct" id="Q81TG1">
    <property type="interactions" value="4"/>
</dbReference>
<dbReference type="STRING" id="261594.GBAA_1316"/>
<dbReference type="DNASU" id="1086037"/>
<dbReference type="KEGG" id="ban:BA_1316"/>
<dbReference type="KEGG" id="banh:HYU01_06705"/>
<dbReference type="KEGG" id="bar:GBAA_1316"/>
<dbReference type="KEGG" id="bat:BAS1217"/>
<dbReference type="PATRIC" id="fig|198094.11.peg.1288"/>
<dbReference type="eggNOG" id="COG1139">
    <property type="taxonomic scope" value="Bacteria"/>
</dbReference>
<dbReference type="HOGENOM" id="CLU_027059_2_0_9"/>
<dbReference type="OMA" id="HCPVYDK"/>
<dbReference type="OrthoDB" id="9782337at2"/>
<dbReference type="Proteomes" id="UP000000427">
    <property type="component" value="Chromosome"/>
</dbReference>
<dbReference type="Proteomes" id="UP000000594">
    <property type="component" value="Chromosome"/>
</dbReference>
<dbReference type="GO" id="GO:0051539">
    <property type="term" value="F:4 iron, 4 sulfur cluster binding"/>
    <property type="evidence" value="ECO:0007669"/>
    <property type="project" value="UniProtKB-KW"/>
</dbReference>
<dbReference type="GO" id="GO:0046872">
    <property type="term" value="F:metal ion binding"/>
    <property type="evidence" value="ECO:0007669"/>
    <property type="project" value="UniProtKB-KW"/>
</dbReference>
<dbReference type="GO" id="GO:0006089">
    <property type="term" value="P:lactate metabolic process"/>
    <property type="evidence" value="ECO:0007669"/>
    <property type="project" value="UniProtKB-UniRule"/>
</dbReference>
<dbReference type="Gene3D" id="1.10.1060.10">
    <property type="entry name" value="Alpha-helical ferredoxin"/>
    <property type="match status" value="1"/>
</dbReference>
<dbReference type="Gene3D" id="3.40.50.10420">
    <property type="entry name" value="NagB/RpiA/CoA transferase-like"/>
    <property type="match status" value="1"/>
</dbReference>
<dbReference type="HAMAP" id="MF_02103">
    <property type="entry name" value="LutB"/>
    <property type="match status" value="1"/>
</dbReference>
<dbReference type="InterPro" id="IPR017896">
    <property type="entry name" value="4Fe4S_Fe-S-bd"/>
</dbReference>
<dbReference type="InterPro" id="IPR017900">
    <property type="entry name" value="4Fe4S_Fe_S_CS"/>
</dbReference>
<dbReference type="InterPro" id="IPR024185">
    <property type="entry name" value="FTHF_cligase-like_sf"/>
</dbReference>
<dbReference type="InterPro" id="IPR009051">
    <property type="entry name" value="Helical_ferredxn"/>
</dbReference>
<dbReference type="InterPro" id="IPR003741">
    <property type="entry name" value="LUD_dom"/>
</dbReference>
<dbReference type="InterPro" id="IPR022825">
    <property type="entry name" value="LutB"/>
</dbReference>
<dbReference type="InterPro" id="IPR004452">
    <property type="entry name" value="LutB/LldF"/>
</dbReference>
<dbReference type="InterPro" id="IPR024569">
    <property type="entry name" value="LutB_C"/>
</dbReference>
<dbReference type="InterPro" id="IPR037171">
    <property type="entry name" value="NagB/RpiA_transferase-like"/>
</dbReference>
<dbReference type="NCBIfam" id="TIGR00273">
    <property type="entry name" value="LutB/LldF family L-lactate oxidation iron-sulfur protein"/>
    <property type="match status" value="1"/>
</dbReference>
<dbReference type="PANTHER" id="PTHR47153">
    <property type="entry name" value="LACTATE UTILIZATION PROTEIN B"/>
    <property type="match status" value="1"/>
</dbReference>
<dbReference type="PANTHER" id="PTHR47153:SF2">
    <property type="entry name" value="LACTATE UTILIZATION PROTEIN B"/>
    <property type="match status" value="1"/>
</dbReference>
<dbReference type="Pfam" id="PF13183">
    <property type="entry name" value="Fer4_8"/>
    <property type="match status" value="1"/>
</dbReference>
<dbReference type="Pfam" id="PF02589">
    <property type="entry name" value="LUD_dom"/>
    <property type="match status" value="1"/>
</dbReference>
<dbReference type="Pfam" id="PF11870">
    <property type="entry name" value="LutB_C"/>
    <property type="match status" value="1"/>
</dbReference>
<dbReference type="SUPFAM" id="SSF46548">
    <property type="entry name" value="alpha-helical ferredoxin"/>
    <property type="match status" value="1"/>
</dbReference>
<dbReference type="SUPFAM" id="SSF100950">
    <property type="entry name" value="NagB/RpiA/CoA transferase-like"/>
    <property type="match status" value="1"/>
</dbReference>
<dbReference type="PROSITE" id="PS00198">
    <property type="entry name" value="4FE4S_FER_1"/>
    <property type="match status" value="1"/>
</dbReference>
<name>LUTB_BACAN</name>
<keyword id="KW-0004">4Fe-4S</keyword>
<keyword id="KW-0249">Electron transport</keyword>
<keyword id="KW-0408">Iron</keyword>
<keyword id="KW-0411">Iron-sulfur</keyword>
<keyword id="KW-0479">Metal-binding</keyword>
<keyword id="KW-1185">Reference proteome</keyword>
<keyword id="KW-0677">Repeat</keyword>
<keyword id="KW-0813">Transport</keyword>
<organism>
    <name type="scientific">Bacillus anthracis</name>
    <dbReference type="NCBI Taxonomy" id="1392"/>
    <lineage>
        <taxon>Bacteria</taxon>
        <taxon>Bacillati</taxon>
        <taxon>Bacillota</taxon>
        <taxon>Bacilli</taxon>
        <taxon>Bacillales</taxon>
        <taxon>Bacillaceae</taxon>
        <taxon>Bacillus</taxon>
        <taxon>Bacillus cereus group</taxon>
    </lineage>
</organism>
<protein>
    <recommendedName>
        <fullName evidence="1">Lactate utilization protein B</fullName>
    </recommendedName>
</protein>